<evidence type="ECO:0000255" key="1">
    <source>
        <dbReference type="HAMAP-Rule" id="MF_00766"/>
    </source>
</evidence>
<evidence type="ECO:0000305" key="2"/>
<protein>
    <recommendedName>
        <fullName evidence="1">Biosynthetic peptidoglycan transglycosylase</fullName>
        <ecNumber evidence="1">2.4.99.28</ecNumber>
    </recommendedName>
    <alternativeName>
        <fullName evidence="1">Glycan polymerase</fullName>
    </alternativeName>
    <alternativeName>
        <fullName evidence="1">Peptidoglycan glycosyltransferase MtgA</fullName>
        <shortName evidence="1">PGT</shortName>
    </alternativeName>
</protein>
<gene>
    <name evidence="1" type="primary">mtgA</name>
    <name type="ordered locus">BR1776</name>
    <name type="ordered locus">BS1330_I1770</name>
</gene>
<reference key="1">
    <citation type="journal article" date="2002" name="Proc. Natl. Acad. Sci. U.S.A.">
        <title>The Brucella suis genome reveals fundamental similarities between animal and plant pathogens and symbionts.</title>
        <authorList>
            <person name="Paulsen I.T."/>
            <person name="Seshadri R."/>
            <person name="Nelson K.E."/>
            <person name="Eisen J.A."/>
            <person name="Heidelberg J.F."/>
            <person name="Read T.D."/>
            <person name="Dodson R.J."/>
            <person name="Umayam L.A."/>
            <person name="Brinkac L.M."/>
            <person name="Beanan M.J."/>
            <person name="Daugherty S.C."/>
            <person name="DeBoy R.T."/>
            <person name="Durkin A.S."/>
            <person name="Kolonay J.F."/>
            <person name="Madupu R."/>
            <person name="Nelson W.C."/>
            <person name="Ayodeji B."/>
            <person name="Kraul M."/>
            <person name="Shetty J."/>
            <person name="Malek J.A."/>
            <person name="Van Aken S.E."/>
            <person name="Riedmuller S."/>
            <person name="Tettelin H."/>
            <person name="Gill S.R."/>
            <person name="White O."/>
            <person name="Salzberg S.L."/>
            <person name="Hoover D.L."/>
            <person name="Lindler L.E."/>
            <person name="Halling S.M."/>
            <person name="Boyle S.M."/>
            <person name="Fraser C.M."/>
        </authorList>
    </citation>
    <scope>NUCLEOTIDE SEQUENCE [LARGE SCALE GENOMIC DNA]</scope>
    <source>
        <strain>1330</strain>
    </source>
</reference>
<reference key="2">
    <citation type="journal article" date="2011" name="J. Bacteriol.">
        <title>Revised genome sequence of Brucella suis 1330.</title>
        <authorList>
            <person name="Tae H."/>
            <person name="Shallom S."/>
            <person name="Settlage R."/>
            <person name="Preston D."/>
            <person name="Adams L.G."/>
            <person name="Garner H.R."/>
        </authorList>
    </citation>
    <scope>NUCLEOTIDE SEQUENCE [LARGE SCALE GENOMIC DNA]</scope>
    <source>
        <strain>1330</strain>
    </source>
</reference>
<accession>Q8FYT4</accession>
<accession>G0K7B5</accession>
<name>MTGA_BRUSU</name>
<proteinExistence type="inferred from homology"/>
<organism>
    <name type="scientific">Brucella suis biovar 1 (strain 1330)</name>
    <dbReference type="NCBI Taxonomy" id="204722"/>
    <lineage>
        <taxon>Bacteria</taxon>
        <taxon>Pseudomonadati</taxon>
        <taxon>Pseudomonadota</taxon>
        <taxon>Alphaproteobacteria</taxon>
        <taxon>Hyphomicrobiales</taxon>
        <taxon>Brucellaceae</taxon>
        <taxon>Brucella/Ochrobactrum group</taxon>
        <taxon>Brucella</taxon>
    </lineage>
</organism>
<dbReference type="EC" id="2.4.99.28" evidence="1"/>
<dbReference type="EMBL" id="AE014291">
    <property type="protein sequence ID" value="AAN30674.1"/>
    <property type="status" value="ALT_INIT"/>
    <property type="molecule type" value="Genomic_DNA"/>
</dbReference>
<dbReference type="EMBL" id="CP002997">
    <property type="protein sequence ID" value="AEM19091.1"/>
    <property type="status" value="ALT_INIT"/>
    <property type="molecule type" value="Genomic_DNA"/>
</dbReference>
<dbReference type="SMR" id="Q8FYT4"/>
<dbReference type="CAZy" id="GT51">
    <property type="family name" value="Glycosyltransferase Family 51"/>
</dbReference>
<dbReference type="KEGG" id="bms:BR1776"/>
<dbReference type="KEGG" id="bsi:BS1330_I1770"/>
<dbReference type="HOGENOM" id="CLU_006354_1_1_5"/>
<dbReference type="UniPathway" id="UPA00219"/>
<dbReference type="PRO" id="PR:Q8FYT4"/>
<dbReference type="Proteomes" id="UP000007104">
    <property type="component" value="Chromosome I"/>
</dbReference>
<dbReference type="GO" id="GO:0009274">
    <property type="term" value="C:peptidoglycan-based cell wall"/>
    <property type="evidence" value="ECO:0007669"/>
    <property type="project" value="InterPro"/>
</dbReference>
<dbReference type="GO" id="GO:0005886">
    <property type="term" value="C:plasma membrane"/>
    <property type="evidence" value="ECO:0007669"/>
    <property type="project" value="UniProtKB-SubCell"/>
</dbReference>
<dbReference type="GO" id="GO:0016763">
    <property type="term" value="F:pentosyltransferase activity"/>
    <property type="evidence" value="ECO:0007669"/>
    <property type="project" value="InterPro"/>
</dbReference>
<dbReference type="GO" id="GO:0008955">
    <property type="term" value="F:peptidoglycan glycosyltransferase activity"/>
    <property type="evidence" value="ECO:0007669"/>
    <property type="project" value="UniProtKB-UniRule"/>
</dbReference>
<dbReference type="GO" id="GO:0071555">
    <property type="term" value="P:cell wall organization"/>
    <property type="evidence" value="ECO:0007669"/>
    <property type="project" value="UniProtKB-KW"/>
</dbReference>
<dbReference type="GO" id="GO:0009252">
    <property type="term" value="P:peptidoglycan biosynthetic process"/>
    <property type="evidence" value="ECO:0007669"/>
    <property type="project" value="UniProtKB-UniRule"/>
</dbReference>
<dbReference type="GO" id="GO:0008360">
    <property type="term" value="P:regulation of cell shape"/>
    <property type="evidence" value="ECO:0007669"/>
    <property type="project" value="UniProtKB-KW"/>
</dbReference>
<dbReference type="Gene3D" id="1.10.3810.10">
    <property type="entry name" value="Biosynthetic peptidoglycan transglycosylase-like"/>
    <property type="match status" value="1"/>
</dbReference>
<dbReference type="HAMAP" id="MF_00766">
    <property type="entry name" value="PGT_MtgA"/>
    <property type="match status" value="1"/>
</dbReference>
<dbReference type="InterPro" id="IPR001264">
    <property type="entry name" value="Glyco_trans_51"/>
</dbReference>
<dbReference type="InterPro" id="IPR023346">
    <property type="entry name" value="Lysozyme-like_dom_sf"/>
</dbReference>
<dbReference type="InterPro" id="IPR036950">
    <property type="entry name" value="PBP_transglycosylase"/>
</dbReference>
<dbReference type="InterPro" id="IPR011812">
    <property type="entry name" value="Pep_trsgly"/>
</dbReference>
<dbReference type="NCBIfam" id="TIGR02070">
    <property type="entry name" value="mono_pep_trsgly"/>
    <property type="match status" value="1"/>
</dbReference>
<dbReference type="PANTHER" id="PTHR30400:SF0">
    <property type="entry name" value="BIOSYNTHETIC PEPTIDOGLYCAN TRANSGLYCOSYLASE"/>
    <property type="match status" value="1"/>
</dbReference>
<dbReference type="PANTHER" id="PTHR30400">
    <property type="entry name" value="MONOFUNCTIONAL BIOSYNTHETIC PEPTIDOGLYCAN TRANSGLYCOSYLASE"/>
    <property type="match status" value="1"/>
</dbReference>
<dbReference type="Pfam" id="PF00912">
    <property type="entry name" value="Transgly"/>
    <property type="match status" value="1"/>
</dbReference>
<dbReference type="SUPFAM" id="SSF53955">
    <property type="entry name" value="Lysozyme-like"/>
    <property type="match status" value="1"/>
</dbReference>
<comment type="function">
    <text evidence="1">Peptidoglycan polymerase that catalyzes glycan chain elongation from lipid-linked precursors.</text>
</comment>
<comment type="catalytic activity">
    <reaction evidence="1">
        <text>[GlcNAc-(1-&gt;4)-Mur2Ac(oyl-L-Ala-gamma-D-Glu-L-Lys-D-Ala-D-Ala)](n)-di-trans,octa-cis-undecaprenyl diphosphate + beta-D-GlcNAc-(1-&gt;4)-Mur2Ac(oyl-L-Ala-gamma-D-Glu-L-Lys-D-Ala-D-Ala)-di-trans,octa-cis-undecaprenyl diphosphate = [GlcNAc-(1-&gt;4)-Mur2Ac(oyl-L-Ala-gamma-D-Glu-L-Lys-D-Ala-D-Ala)](n+1)-di-trans,octa-cis-undecaprenyl diphosphate + di-trans,octa-cis-undecaprenyl diphosphate + H(+)</text>
        <dbReference type="Rhea" id="RHEA:23708"/>
        <dbReference type="Rhea" id="RHEA-COMP:9602"/>
        <dbReference type="Rhea" id="RHEA-COMP:9603"/>
        <dbReference type="ChEBI" id="CHEBI:15378"/>
        <dbReference type="ChEBI" id="CHEBI:58405"/>
        <dbReference type="ChEBI" id="CHEBI:60033"/>
        <dbReference type="ChEBI" id="CHEBI:78435"/>
        <dbReference type="EC" id="2.4.99.28"/>
    </reaction>
</comment>
<comment type="pathway">
    <text evidence="1">Cell wall biogenesis; peptidoglycan biosynthesis.</text>
</comment>
<comment type="subcellular location">
    <subcellularLocation>
        <location evidence="1">Cell inner membrane</location>
        <topology evidence="1">Single-pass membrane protein</topology>
    </subcellularLocation>
</comment>
<comment type="similarity">
    <text evidence="1">Belongs to the glycosyltransferase 51 family.</text>
</comment>
<comment type="sequence caution" evidence="2">
    <conflict type="erroneous initiation">
        <sequence resource="EMBL-CDS" id="AAN30674"/>
    </conflict>
</comment>
<comment type="sequence caution" evidence="2">
    <conflict type="erroneous initiation">
        <sequence resource="EMBL-CDS" id="AEM19091"/>
    </conflict>
    <text>Extended N-terminus.</text>
</comment>
<sequence length="224" mass="24684">MWGSRIAVALRILVVLAILPVFLLLVYSLPFVRPVSTLMVKDYALLQGVNRQWVDIENIAPVLVNSVMMAEDGQFCSHGGVDWHQLGLVLDDAGDGGPSRGASTITMQMVKNLFLWNGRSYLRKGLEFPLALIADAVLSKKRIMEIYLNIAEWGPGIYGIEAAARHYFKRSAAKLTARQAALLAVTLPNPALRNPAKPTRNMQRIARIVAGRAMRSGPYVTCVK</sequence>
<feature type="chain" id="PRO_0000083122" description="Biosynthetic peptidoglycan transglycosylase">
    <location>
        <begin position="1"/>
        <end position="224"/>
    </location>
</feature>
<feature type="transmembrane region" description="Helical" evidence="1">
    <location>
        <begin position="12"/>
        <end position="32"/>
    </location>
</feature>
<keyword id="KW-0997">Cell inner membrane</keyword>
<keyword id="KW-1003">Cell membrane</keyword>
<keyword id="KW-0133">Cell shape</keyword>
<keyword id="KW-0961">Cell wall biogenesis/degradation</keyword>
<keyword id="KW-0328">Glycosyltransferase</keyword>
<keyword id="KW-0472">Membrane</keyword>
<keyword id="KW-0573">Peptidoglycan synthesis</keyword>
<keyword id="KW-0808">Transferase</keyword>
<keyword id="KW-0812">Transmembrane</keyword>
<keyword id="KW-1133">Transmembrane helix</keyword>